<proteinExistence type="inferred from homology"/>
<name>NORM_BURPS</name>
<evidence type="ECO:0000250" key="1"/>
<evidence type="ECO:0000255" key="2"/>
<evidence type="ECO:0000305" key="3"/>
<protein>
    <recommendedName>
        <fullName>Probable multidrug resistance protein NorM</fullName>
    </recommendedName>
    <alternativeName>
        <fullName>Multidrug-efflux transporter</fullName>
    </alternativeName>
</protein>
<sequence length="468" mass="48159">MSPTGFTRAAAAPPPTLSRHAADTARLAAPLAIAQLSQMAMSVTDTVLLGSLGPDALAAGGLGANLSFVVVTLLQGVLTSVSVSVAHARGAMAEDRVPHIYWTGFALSLLLAVPAFALLSFAQPLLLAFGEPAALARNVGEYAAVLRFAAPGSLIGVGLMRSFLPAIGAAKRLLWVSLAGVGVNAFLNYGLIHGAFGLPRLGFLGSATATTITIWLTAITLVALLHGRSTFRHFVAATRPRLPLMGELFGIGWPVAITYGVESTLFLATGLTVGVLGESSLAAHQIALNVASVAFMVPLAIGQAANVRVGYWAGAGAPVAARHAGFVALGLGVAFMSLSGLVLIVAPHAIVGLYLKLDDPANARTVVLATSLLGIAAVFQIVDGMQTVGSGCLRGLKDTRVPMLAAMLGYWGIGFPTGYWFAFHAGLGARGLWWGLAAGLASVAMLMTWRFHRKSAALGVRADARGQA</sequence>
<feature type="chain" id="PRO_0000164212" description="Probable multidrug resistance protein NorM">
    <location>
        <begin position="1"/>
        <end position="468"/>
    </location>
</feature>
<feature type="transmembrane region" description="Helical" evidence="2">
    <location>
        <begin position="57"/>
        <end position="79"/>
    </location>
</feature>
<feature type="transmembrane region" description="Helical" evidence="2">
    <location>
        <begin position="100"/>
        <end position="122"/>
    </location>
</feature>
<feature type="transmembrane region" description="Helical" evidence="2">
    <location>
        <begin position="142"/>
        <end position="164"/>
    </location>
</feature>
<feature type="transmembrane region" description="Helical" evidence="2">
    <location>
        <begin position="173"/>
        <end position="195"/>
    </location>
</feature>
<feature type="transmembrane region" description="Helical" evidence="2">
    <location>
        <begin position="205"/>
        <end position="227"/>
    </location>
</feature>
<feature type="transmembrane region" description="Helical" evidence="2">
    <location>
        <begin position="248"/>
        <end position="270"/>
    </location>
</feature>
<feature type="transmembrane region" description="Helical" evidence="2">
    <location>
        <begin position="280"/>
        <end position="302"/>
    </location>
</feature>
<feature type="transmembrane region" description="Helical" evidence="2">
    <location>
        <begin position="323"/>
        <end position="345"/>
    </location>
</feature>
<feature type="transmembrane region" description="Helical" evidence="2">
    <location>
        <begin position="360"/>
        <end position="382"/>
    </location>
</feature>
<feature type="transmembrane region" description="Helical" evidence="2">
    <location>
        <begin position="401"/>
        <end position="423"/>
    </location>
</feature>
<feature type="transmembrane region" description="Helical" evidence="2">
    <location>
        <begin position="433"/>
        <end position="452"/>
    </location>
</feature>
<gene>
    <name type="primary">norM</name>
    <name type="ordered locus">BPSL2468</name>
</gene>
<comment type="function">
    <text evidence="1">Multidrug efflux pump.</text>
</comment>
<comment type="subcellular location">
    <subcellularLocation>
        <location evidence="1">Cell inner membrane</location>
        <topology evidence="1">Multi-pass membrane protein</topology>
    </subcellularLocation>
</comment>
<comment type="similarity">
    <text evidence="3">Belongs to the multi antimicrobial extrusion (MATE) (TC 2.A.66.1) family.</text>
</comment>
<dbReference type="EMBL" id="BX571965">
    <property type="protein sequence ID" value="CAH36471.1"/>
    <property type="molecule type" value="Genomic_DNA"/>
</dbReference>
<dbReference type="RefSeq" id="WP_009938335.1">
    <property type="nucleotide sequence ID" value="NC_006350.1"/>
</dbReference>
<dbReference type="RefSeq" id="YP_109060.1">
    <property type="nucleotide sequence ID" value="NC_006350.1"/>
</dbReference>
<dbReference type="SMR" id="Q63S57"/>
<dbReference type="STRING" id="272560.BPSL2468"/>
<dbReference type="KEGG" id="bps:BPSL2468"/>
<dbReference type="PATRIC" id="fig|272560.51.peg.2921"/>
<dbReference type="eggNOG" id="COG0534">
    <property type="taxonomic scope" value="Bacteria"/>
</dbReference>
<dbReference type="Proteomes" id="UP000000605">
    <property type="component" value="Chromosome 1"/>
</dbReference>
<dbReference type="GO" id="GO:0005886">
    <property type="term" value="C:plasma membrane"/>
    <property type="evidence" value="ECO:0007669"/>
    <property type="project" value="UniProtKB-SubCell"/>
</dbReference>
<dbReference type="GO" id="GO:0015297">
    <property type="term" value="F:antiporter activity"/>
    <property type="evidence" value="ECO:0007669"/>
    <property type="project" value="UniProtKB-KW"/>
</dbReference>
<dbReference type="GO" id="GO:0042910">
    <property type="term" value="F:xenobiotic transmembrane transporter activity"/>
    <property type="evidence" value="ECO:0007669"/>
    <property type="project" value="InterPro"/>
</dbReference>
<dbReference type="GO" id="GO:0006811">
    <property type="term" value="P:monoatomic ion transport"/>
    <property type="evidence" value="ECO:0007669"/>
    <property type="project" value="UniProtKB-KW"/>
</dbReference>
<dbReference type="CDD" id="cd13131">
    <property type="entry name" value="MATE_NorM_like"/>
    <property type="match status" value="1"/>
</dbReference>
<dbReference type="InterPro" id="IPR002528">
    <property type="entry name" value="MATE_fam"/>
</dbReference>
<dbReference type="InterPro" id="IPR050222">
    <property type="entry name" value="MATE_MdtK"/>
</dbReference>
<dbReference type="InterPro" id="IPR048279">
    <property type="entry name" value="MdtK-like"/>
</dbReference>
<dbReference type="NCBIfam" id="TIGR00797">
    <property type="entry name" value="matE"/>
    <property type="match status" value="1"/>
</dbReference>
<dbReference type="PANTHER" id="PTHR43298:SF2">
    <property type="entry name" value="FMN_FAD EXPORTER YEEO-RELATED"/>
    <property type="match status" value="1"/>
</dbReference>
<dbReference type="PANTHER" id="PTHR43298">
    <property type="entry name" value="MULTIDRUG RESISTANCE PROTEIN NORM-RELATED"/>
    <property type="match status" value="1"/>
</dbReference>
<dbReference type="Pfam" id="PF01554">
    <property type="entry name" value="MatE"/>
    <property type="match status" value="2"/>
</dbReference>
<dbReference type="PIRSF" id="PIRSF006603">
    <property type="entry name" value="DinF"/>
    <property type="match status" value="1"/>
</dbReference>
<keyword id="KW-0050">Antiport</keyword>
<keyword id="KW-0997">Cell inner membrane</keyword>
<keyword id="KW-1003">Cell membrane</keyword>
<keyword id="KW-0406">Ion transport</keyword>
<keyword id="KW-0472">Membrane</keyword>
<keyword id="KW-1185">Reference proteome</keyword>
<keyword id="KW-0812">Transmembrane</keyword>
<keyword id="KW-1133">Transmembrane helix</keyword>
<keyword id="KW-0813">Transport</keyword>
<organism>
    <name type="scientific">Burkholderia pseudomallei (strain K96243)</name>
    <dbReference type="NCBI Taxonomy" id="272560"/>
    <lineage>
        <taxon>Bacteria</taxon>
        <taxon>Pseudomonadati</taxon>
        <taxon>Pseudomonadota</taxon>
        <taxon>Betaproteobacteria</taxon>
        <taxon>Burkholderiales</taxon>
        <taxon>Burkholderiaceae</taxon>
        <taxon>Burkholderia</taxon>
        <taxon>pseudomallei group</taxon>
    </lineage>
</organism>
<accession>Q63S57</accession>
<reference key="1">
    <citation type="journal article" date="2004" name="Proc. Natl. Acad. Sci. U.S.A.">
        <title>Genomic plasticity of the causative agent of melioidosis, Burkholderia pseudomallei.</title>
        <authorList>
            <person name="Holden M.T.G."/>
            <person name="Titball R.W."/>
            <person name="Peacock S.J."/>
            <person name="Cerdeno-Tarraga A.-M."/>
            <person name="Atkins T."/>
            <person name="Crossman L.C."/>
            <person name="Pitt T."/>
            <person name="Churcher C."/>
            <person name="Mungall K.L."/>
            <person name="Bentley S.D."/>
            <person name="Sebaihia M."/>
            <person name="Thomson N.R."/>
            <person name="Bason N."/>
            <person name="Beacham I.R."/>
            <person name="Brooks K."/>
            <person name="Brown K.A."/>
            <person name="Brown N.F."/>
            <person name="Challis G.L."/>
            <person name="Cherevach I."/>
            <person name="Chillingworth T."/>
            <person name="Cronin A."/>
            <person name="Crossett B."/>
            <person name="Davis P."/>
            <person name="DeShazer D."/>
            <person name="Feltwell T."/>
            <person name="Fraser A."/>
            <person name="Hance Z."/>
            <person name="Hauser H."/>
            <person name="Holroyd S."/>
            <person name="Jagels K."/>
            <person name="Keith K.E."/>
            <person name="Maddison M."/>
            <person name="Moule S."/>
            <person name="Price C."/>
            <person name="Quail M.A."/>
            <person name="Rabbinowitsch E."/>
            <person name="Rutherford K."/>
            <person name="Sanders M."/>
            <person name="Simmonds M."/>
            <person name="Songsivilai S."/>
            <person name="Stevens K."/>
            <person name="Tumapa S."/>
            <person name="Vesaratchavest M."/>
            <person name="Whitehead S."/>
            <person name="Yeats C."/>
            <person name="Barrell B.G."/>
            <person name="Oyston P.C.F."/>
            <person name="Parkhill J."/>
        </authorList>
    </citation>
    <scope>NUCLEOTIDE SEQUENCE [LARGE SCALE GENOMIC DNA]</scope>
    <source>
        <strain>K96243</strain>
    </source>
</reference>